<proteinExistence type="inferred from homology"/>
<name>RS4_POLNS</name>
<evidence type="ECO:0000255" key="1">
    <source>
        <dbReference type="HAMAP-Rule" id="MF_01306"/>
    </source>
</evidence>
<evidence type="ECO:0000256" key="2">
    <source>
        <dbReference type="SAM" id="MobiDB-lite"/>
    </source>
</evidence>
<evidence type="ECO:0000305" key="3"/>
<sequence>MARYLGPKAKLARREGTDLFLKSARRALSDKCRLDNKPGQDGRTSGSRTSDYGNQLREKQKVKRIYGVLERQFRRYFAEAERRKGNTGETLLQLLESRLDNVVYRMGFGSTRAEARQLVSHCAILLNGNPVNIPSIQVKPGDVVAIREKAKKQARITESLNLVGQMAAVTWVSVDVAKLEGTFKQVPDREDISGEINESLIVELYSR</sequence>
<comment type="function">
    <text evidence="1">One of the primary rRNA binding proteins, it binds directly to 16S rRNA where it nucleates assembly of the body of the 30S subunit.</text>
</comment>
<comment type="function">
    <text evidence="1">With S5 and S12 plays an important role in translational accuracy.</text>
</comment>
<comment type="subunit">
    <text evidence="1">Part of the 30S ribosomal subunit. Contacts protein S5. The interaction surface between S4 and S5 is involved in control of translational fidelity.</text>
</comment>
<comment type="similarity">
    <text evidence="1">Belongs to the universal ribosomal protein uS4 family.</text>
</comment>
<gene>
    <name evidence="1" type="primary">rpsD</name>
    <name type="ordered locus">Pnec_0075</name>
</gene>
<organism>
    <name type="scientific">Polynucleobacter necessarius subsp. necessarius (strain STIR1)</name>
    <dbReference type="NCBI Taxonomy" id="452638"/>
    <lineage>
        <taxon>Bacteria</taxon>
        <taxon>Pseudomonadati</taxon>
        <taxon>Pseudomonadota</taxon>
        <taxon>Betaproteobacteria</taxon>
        <taxon>Burkholderiales</taxon>
        <taxon>Burkholderiaceae</taxon>
        <taxon>Polynucleobacter</taxon>
    </lineage>
</organism>
<protein>
    <recommendedName>
        <fullName evidence="1">Small ribosomal subunit protein uS4</fullName>
    </recommendedName>
    <alternativeName>
        <fullName evidence="3">30S ribosomal protein S4</fullName>
    </alternativeName>
</protein>
<accession>B1XSS6</accession>
<keyword id="KW-0687">Ribonucleoprotein</keyword>
<keyword id="KW-0689">Ribosomal protein</keyword>
<keyword id="KW-0694">RNA-binding</keyword>
<keyword id="KW-0699">rRNA-binding</keyword>
<dbReference type="EMBL" id="CP001010">
    <property type="protein sequence ID" value="ACB43403.1"/>
    <property type="molecule type" value="Genomic_DNA"/>
</dbReference>
<dbReference type="SMR" id="B1XSS6"/>
<dbReference type="STRING" id="452638.Pnec_0075"/>
<dbReference type="KEGG" id="pne:Pnec_0075"/>
<dbReference type="eggNOG" id="COG0522">
    <property type="taxonomic scope" value="Bacteria"/>
</dbReference>
<dbReference type="HOGENOM" id="CLU_092403_0_2_4"/>
<dbReference type="OrthoDB" id="9803672at2"/>
<dbReference type="GO" id="GO:0015935">
    <property type="term" value="C:small ribosomal subunit"/>
    <property type="evidence" value="ECO:0007669"/>
    <property type="project" value="InterPro"/>
</dbReference>
<dbReference type="GO" id="GO:0019843">
    <property type="term" value="F:rRNA binding"/>
    <property type="evidence" value="ECO:0007669"/>
    <property type="project" value="UniProtKB-UniRule"/>
</dbReference>
<dbReference type="GO" id="GO:0003735">
    <property type="term" value="F:structural constituent of ribosome"/>
    <property type="evidence" value="ECO:0007669"/>
    <property type="project" value="InterPro"/>
</dbReference>
<dbReference type="GO" id="GO:0042274">
    <property type="term" value="P:ribosomal small subunit biogenesis"/>
    <property type="evidence" value="ECO:0007669"/>
    <property type="project" value="TreeGrafter"/>
</dbReference>
<dbReference type="GO" id="GO:0006412">
    <property type="term" value="P:translation"/>
    <property type="evidence" value="ECO:0007669"/>
    <property type="project" value="UniProtKB-UniRule"/>
</dbReference>
<dbReference type="CDD" id="cd00165">
    <property type="entry name" value="S4"/>
    <property type="match status" value="1"/>
</dbReference>
<dbReference type="FunFam" id="1.10.1050.10:FF:000001">
    <property type="entry name" value="30S ribosomal protein S4"/>
    <property type="match status" value="1"/>
</dbReference>
<dbReference type="FunFam" id="3.10.290.10:FF:000001">
    <property type="entry name" value="30S ribosomal protein S4"/>
    <property type="match status" value="1"/>
</dbReference>
<dbReference type="Gene3D" id="1.10.1050.10">
    <property type="entry name" value="Ribosomal Protein S4 Delta 41, Chain A, domain 1"/>
    <property type="match status" value="1"/>
</dbReference>
<dbReference type="Gene3D" id="3.10.290.10">
    <property type="entry name" value="RNA-binding S4 domain"/>
    <property type="match status" value="1"/>
</dbReference>
<dbReference type="HAMAP" id="MF_01306_B">
    <property type="entry name" value="Ribosomal_uS4_B"/>
    <property type="match status" value="1"/>
</dbReference>
<dbReference type="InterPro" id="IPR022801">
    <property type="entry name" value="Ribosomal_uS4"/>
</dbReference>
<dbReference type="InterPro" id="IPR005709">
    <property type="entry name" value="Ribosomal_uS4_bac-type"/>
</dbReference>
<dbReference type="InterPro" id="IPR018079">
    <property type="entry name" value="Ribosomal_uS4_CS"/>
</dbReference>
<dbReference type="InterPro" id="IPR001912">
    <property type="entry name" value="Ribosomal_uS4_N"/>
</dbReference>
<dbReference type="InterPro" id="IPR002942">
    <property type="entry name" value="S4_RNA-bd"/>
</dbReference>
<dbReference type="InterPro" id="IPR036986">
    <property type="entry name" value="S4_RNA-bd_sf"/>
</dbReference>
<dbReference type="NCBIfam" id="NF003717">
    <property type="entry name" value="PRK05327.1"/>
    <property type="match status" value="1"/>
</dbReference>
<dbReference type="NCBIfam" id="TIGR01017">
    <property type="entry name" value="rpsD_bact"/>
    <property type="match status" value="1"/>
</dbReference>
<dbReference type="PANTHER" id="PTHR11831">
    <property type="entry name" value="30S 40S RIBOSOMAL PROTEIN"/>
    <property type="match status" value="1"/>
</dbReference>
<dbReference type="PANTHER" id="PTHR11831:SF4">
    <property type="entry name" value="SMALL RIBOSOMAL SUBUNIT PROTEIN US4M"/>
    <property type="match status" value="1"/>
</dbReference>
<dbReference type="Pfam" id="PF00163">
    <property type="entry name" value="Ribosomal_S4"/>
    <property type="match status" value="1"/>
</dbReference>
<dbReference type="Pfam" id="PF01479">
    <property type="entry name" value="S4"/>
    <property type="match status" value="1"/>
</dbReference>
<dbReference type="SMART" id="SM01390">
    <property type="entry name" value="Ribosomal_S4"/>
    <property type="match status" value="1"/>
</dbReference>
<dbReference type="SMART" id="SM00363">
    <property type="entry name" value="S4"/>
    <property type="match status" value="1"/>
</dbReference>
<dbReference type="SUPFAM" id="SSF55174">
    <property type="entry name" value="Alpha-L RNA-binding motif"/>
    <property type="match status" value="1"/>
</dbReference>
<dbReference type="PROSITE" id="PS00632">
    <property type="entry name" value="RIBOSOMAL_S4"/>
    <property type="match status" value="1"/>
</dbReference>
<dbReference type="PROSITE" id="PS50889">
    <property type="entry name" value="S4"/>
    <property type="match status" value="1"/>
</dbReference>
<feature type="chain" id="PRO_1000140772" description="Small ribosomal subunit protein uS4">
    <location>
        <begin position="1"/>
        <end position="207"/>
    </location>
</feature>
<feature type="domain" description="S4 RNA-binding" evidence="1">
    <location>
        <begin position="97"/>
        <end position="158"/>
    </location>
</feature>
<feature type="region of interest" description="Disordered" evidence="2">
    <location>
        <begin position="31"/>
        <end position="56"/>
    </location>
</feature>
<feature type="compositionally biased region" description="Basic and acidic residues" evidence="2">
    <location>
        <begin position="31"/>
        <end position="40"/>
    </location>
</feature>
<feature type="compositionally biased region" description="Polar residues" evidence="2">
    <location>
        <begin position="42"/>
        <end position="53"/>
    </location>
</feature>
<reference key="1">
    <citation type="journal article" date="2013" name="Proc. Natl. Acad. Sci. U.S.A.">
        <title>Polynucleobacter necessarius, a model for genome reduction in both free-living and symbiotic bacteria.</title>
        <authorList>
            <person name="Boscaro V."/>
            <person name="Felletti M."/>
            <person name="Vannini C."/>
            <person name="Ackerman M.S."/>
            <person name="Chain P.S."/>
            <person name="Malfatti S."/>
            <person name="Vergez L.M."/>
            <person name="Shin M."/>
            <person name="Doak T.G."/>
            <person name="Lynch M."/>
            <person name="Petroni G."/>
        </authorList>
    </citation>
    <scope>NUCLEOTIDE SEQUENCE [LARGE SCALE GENOMIC DNA]</scope>
    <source>
        <strain>STIR1</strain>
    </source>
</reference>